<proteinExistence type="inferred from homology"/>
<accession>Q4FRQ5</accession>
<reference key="1">
    <citation type="journal article" date="2010" name="Appl. Environ. Microbiol.">
        <title>The genome sequence of Psychrobacter arcticus 273-4, a psychroactive Siberian permafrost bacterium, reveals mechanisms for adaptation to low-temperature growth.</title>
        <authorList>
            <person name="Ayala-del-Rio H.L."/>
            <person name="Chain P.S."/>
            <person name="Grzymski J.J."/>
            <person name="Ponder M.A."/>
            <person name="Ivanova N."/>
            <person name="Bergholz P.W."/>
            <person name="Di Bartolo G."/>
            <person name="Hauser L."/>
            <person name="Land M."/>
            <person name="Bakermans C."/>
            <person name="Rodrigues D."/>
            <person name="Klappenbach J."/>
            <person name="Zarka D."/>
            <person name="Larimer F."/>
            <person name="Richardson P."/>
            <person name="Murray A."/>
            <person name="Thomashow M."/>
            <person name="Tiedje J.M."/>
        </authorList>
    </citation>
    <scope>NUCLEOTIDE SEQUENCE [LARGE SCALE GENOMIC DNA]</scope>
    <source>
        <strain>DSM 17307 / VKM B-2377 / 273-4</strain>
    </source>
</reference>
<protein>
    <recommendedName>
        <fullName evidence="1">Chorismate synthase</fullName>
        <shortName evidence="1">CS</shortName>
        <ecNumber evidence="1">4.2.3.5</ecNumber>
    </recommendedName>
    <alternativeName>
        <fullName evidence="1">5-enolpyruvylshikimate-3-phosphate phospholyase</fullName>
    </alternativeName>
</protein>
<organism>
    <name type="scientific">Psychrobacter arcticus (strain DSM 17307 / VKM B-2377 / 273-4)</name>
    <dbReference type="NCBI Taxonomy" id="259536"/>
    <lineage>
        <taxon>Bacteria</taxon>
        <taxon>Pseudomonadati</taxon>
        <taxon>Pseudomonadota</taxon>
        <taxon>Gammaproteobacteria</taxon>
        <taxon>Moraxellales</taxon>
        <taxon>Moraxellaceae</taxon>
        <taxon>Psychrobacter</taxon>
    </lineage>
</organism>
<comment type="function">
    <text evidence="1">Catalyzes the anti-1,4-elimination of the C-3 phosphate and the C-6 proR hydrogen from 5-enolpyruvylshikimate-3-phosphate (EPSP) to yield chorismate, which is the branch point compound that serves as the starting substrate for the three terminal pathways of aromatic amino acid biosynthesis. This reaction introduces a second double bond into the aromatic ring system.</text>
</comment>
<comment type="catalytic activity">
    <reaction evidence="1">
        <text>5-O-(1-carboxyvinyl)-3-phosphoshikimate = chorismate + phosphate</text>
        <dbReference type="Rhea" id="RHEA:21020"/>
        <dbReference type="ChEBI" id="CHEBI:29748"/>
        <dbReference type="ChEBI" id="CHEBI:43474"/>
        <dbReference type="ChEBI" id="CHEBI:57701"/>
        <dbReference type="EC" id="4.2.3.5"/>
    </reaction>
</comment>
<comment type="cofactor">
    <cofactor evidence="1">
        <name>FMNH2</name>
        <dbReference type="ChEBI" id="CHEBI:57618"/>
    </cofactor>
    <text evidence="1">Reduced FMN (FMNH(2)).</text>
</comment>
<comment type="pathway">
    <text evidence="1">Metabolic intermediate biosynthesis; chorismate biosynthesis; chorismate from D-erythrose 4-phosphate and phosphoenolpyruvate: step 7/7.</text>
</comment>
<comment type="subunit">
    <text evidence="1">Homotetramer.</text>
</comment>
<comment type="similarity">
    <text evidence="1">Belongs to the chorismate synthase family.</text>
</comment>
<sequence>MAGNSIGQLFTVTTCGESHGAGLMAIVDGVPPGLALSEADLQIDLDRRKPGTSKYSTQRRESDEVEIISGVFEGKTTGTSIGLLIRNTNQKSKDYSEIKDTFRPGHADYTYSMKYGFRDYRGGGRSSARETAMRVAAGAIAKKYLQDRLGVQIRGHVTQIGNEYSNVAEPSKIDWDFVNSNPFFCADKEAVSRFESLIDNLRREGTSCGARLEVIASGVPVGLGEPVFDRLDADIAHAMMSINAVKGVEIGDGMAVAGQFGHSSRDEMTPDGFTANHAGGILGGISSGQDIRVSIALKPTSSITTAGKSINTQGESVDMLTKGRHDPCVGVRATPIAEAMLAIVLLDHYLRHRGQNADVEQPLASIT</sequence>
<keyword id="KW-0028">Amino-acid biosynthesis</keyword>
<keyword id="KW-0057">Aromatic amino acid biosynthesis</keyword>
<keyword id="KW-0274">FAD</keyword>
<keyword id="KW-0285">Flavoprotein</keyword>
<keyword id="KW-0288">FMN</keyword>
<keyword id="KW-0456">Lyase</keyword>
<keyword id="KW-0521">NADP</keyword>
<keyword id="KW-1185">Reference proteome</keyword>
<feature type="chain" id="PRO_0000256320" description="Chorismate synthase">
    <location>
        <begin position="1"/>
        <end position="367"/>
    </location>
</feature>
<feature type="binding site" evidence="1">
    <location>
        <position position="48"/>
    </location>
    <ligand>
        <name>NADP(+)</name>
        <dbReference type="ChEBI" id="CHEBI:58349"/>
    </ligand>
</feature>
<feature type="binding site" evidence="1">
    <location>
        <begin position="125"/>
        <end position="127"/>
    </location>
    <ligand>
        <name>FMN</name>
        <dbReference type="ChEBI" id="CHEBI:58210"/>
    </ligand>
</feature>
<feature type="binding site" evidence="1">
    <location>
        <begin position="243"/>
        <end position="244"/>
    </location>
    <ligand>
        <name>FMN</name>
        <dbReference type="ChEBI" id="CHEBI:58210"/>
    </ligand>
</feature>
<feature type="binding site" evidence="1">
    <location>
        <position position="283"/>
    </location>
    <ligand>
        <name>FMN</name>
        <dbReference type="ChEBI" id="CHEBI:58210"/>
    </ligand>
</feature>
<feature type="binding site" evidence="1">
    <location>
        <begin position="298"/>
        <end position="302"/>
    </location>
    <ligand>
        <name>FMN</name>
        <dbReference type="ChEBI" id="CHEBI:58210"/>
    </ligand>
</feature>
<feature type="binding site" evidence="1">
    <location>
        <position position="324"/>
    </location>
    <ligand>
        <name>FMN</name>
        <dbReference type="ChEBI" id="CHEBI:58210"/>
    </ligand>
</feature>
<dbReference type="EC" id="4.2.3.5" evidence="1"/>
<dbReference type="EMBL" id="CP000082">
    <property type="protein sequence ID" value="AAZ19303.1"/>
    <property type="molecule type" value="Genomic_DNA"/>
</dbReference>
<dbReference type="RefSeq" id="WP_011280721.1">
    <property type="nucleotide sequence ID" value="NC_007204.1"/>
</dbReference>
<dbReference type="SMR" id="Q4FRQ5"/>
<dbReference type="STRING" id="259536.Psyc_1455"/>
<dbReference type="KEGG" id="par:Psyc_1455"/>
<dbReference type="eggNOG" id="COG0082">
    <property type="taxonomic scope" value="Bacteria"/>
</dbReference>
<dbReference type="HOGENOM" id="CLU_034547_0_2_6"/>
<dbReference type="OrthoDB" id="9771806at2"/>
<dbReference type="UniPathway" id="UPA00053">
    <property type="reaction ID" value="UER00090"/>
</dbReference>
<dbReference type="Proteomes" id="UP000000546">
    <property type="component" value="Chromosome"/>
</dbReference>
<dbReference type="GO" id="GO:0005829">
    <property type="term" value="C:cytosol"/>
    <property type="evidence" value="ECO:0007669"/>
    <property type="project" value="TreeGrafter"/>
</dbReference>
<dbReference type="GO" id="GO:0004107">
    <property type="term" value="F:chorismate synthase activity"/>
    <property type="evidence" value="ECO:0007669"/>
    <property type="project" value="UniProtKB-UniRule"/>
</dbReference>
<dbReference type="GO" id="GO:0010181">
    <property type="term" value="F:FMN binding"/>
    <property type="evidence" value="ECO:0007669"/>
    <property type="project" value="TreeGrafter"/>
</dbReference>
<dbReference type="GO" id="GO:0008652">
    <property type="term" value="P:amino acid biosynthetic process"/>
    <property type="evidence" value="ECO:0007669"/>
    <property type="project" value="UniProtKB-KW"/>
</dbReference>
<dbReference type="GO" id="GO:0009073">
    <property type="term" value="P:aromatic amino acid family biosynthetic process"/>
    <property type="evidence" value="ECO:0007669"/>
    <property type="project" value="UniProtKB-KW"/>
</dbReference>
<dbReference type="GO" id="GO:0009423">
    <property type="term" value="P:chorismate biosynthetic process"/>
    <property type="evidence" value="ECO:0007669"/>
    <property type="project" value="UniProtKB-UniRule"/>
</dbReference>
<dbReference type="CDD" id="cd07304">
    <property type="entry name" value="Chorismate_synthase"/>
    <property type="match status" value="1"/>
</dbReference>
<dbReference type="FunFam" id="3.60.150.10:FF:000001">
    <property type="entry name" value="Chorismate synthase"/>
    <property type="match status" value="1"/>
</dbReference>
<dbReference type="Gene3D" id="3.60.150.10">
    <property type="entry name" value="Chorismate synthase AroC"/>
    <property type="match status" value="1"/>
</dbReference>
<dbReference type="HAMAP" id="MF_00300">
    <property type="entry name" value="Chorismate_synth"/>
    <property type="match status" value="1"/>
</dbReference>
<dbReference type="InterPro" id="IPR000453">
    <property type="entry name" value="Chorismate_synth"/>
</dbReference>
<dbReference type="InterPro" id="IPR035904">
    <property type="entry name" value="Chorismate_synth_AroC_sf"/>
</dbReference>
<dbReference type="InterPro" id="IPR020541">
    <property type="entry name" value="Chorismate_synthase_CS"/>
</dbReference>
<dbReference type="NCBIfam" id="TIGR00033">
    <property type="entry name" value="aroC"/>
    <property type="match status" value="1"/>
</dbReference>
<dbReference type="NCBIfam" id="NF003793">
    <property type="entry name" value="PRK05382.1"/>
    <property type="match status" value="1"/>
</dbReference>
<dbReference type="PANTHER" id="PTHR21085">
    <property type="entry name" value="CHORISMATE SYNTHASE"/>
    <property type="match status" value="1"/>
</dbReference>
<dbReference type="PANTHER" id="PTHR21085:SF0">
    <property type="entry name" value="CHORISMATE SYNTHASE"/>
    <property type="match status" value="1"/>
</dbReference>
<dbReference type="Pfam" id="PF01264">
    <property type="entry name" value="Chorismate_synt"/>
    <property type="match status" value="1"/>
</dbReference>
<dbReference type="PIRSF" id="PIRSF001456">
    <property type="entry name" value="Chorismate_synth"/>
    <property type="match status" value="1"/>
</dbReference>
<dbReference type="SUPFAM" id="SSF103263">
    <property type="entry name" value="Chorismate synthase, AroC"/>
    <property type="match status" value="1"/>
</dbReference>
<dbReference type="PROSITE" id="PS00787">
    <property type="entry name" value="CHORISMATE_SYNTHASE_1"/>
    <property type="match status" value="1"/>
</dbReference>
<dbReference type="PROSITE" id="PS00788">
    <property type="entry name" value="CHORISMATE_SYNTHASE_2"/>
    <property type="match status" value="1"/>
</dbReference>
<dbReference type="PROSITE" id="PS00789">
    <property type="entry name" value="CHORISMATE_SYNTHASE_3"/>
    <property type="match status" value="1"/>
</dbReference>
<gene>
    <name evidence="1" type="primary">aroC</name>
    <name type="ordered locus">Psyc_1455</name>
</gene>
<name>AROC_PSYA2</name>
<evidence type="ECO:0000255" key="1">
    <source>
        <dbReference type="HAMAP-Rule" id="MF_00300"/>
    </source>
</evidence>